<gene>
    <name evidence="1" type="primary">ptcA</name>
    <name type="synonym">arcB</name>
    <name type="ordered locus">MSC_0703</name>
</gene>
<keyword id="KW-0963">Cytoplasm</keyword>
<keyword id="KW-0620">Polyamine biosynthesis</keyword>
<keyword id="KW-1185">Reference proteome</keyword>
<keyword id="KW-0808">Transferase</keyword>
<evidence type="ECO:0000255" key="1">
    <source>
        <dbReference type="HAMAP-Rule" id="MF_02102"/>
    </source>
</evidence>
<feature type="chain" id="PRO_0000380722" description="Putrescine carbamoyltransferase">
    <location>
        <begin position="1"/>
        <end position="365"/>
    </location>
</feature>
<feature type="binding site" evidence="1">
    <location>
        <begin position="54"/>
        <end position="58"/>
    </location>
    <ligand>
        <name>carbamoyl phosphate</name>
        <dbReference type="ChEBI" id="CHEBI:58228"/>
    </ligand>
</feature>
<feature type="binding site" evidence="1">
    <location>
        <position position="105"/>
    </location>
    <ligand>
        <name>carbamoyl phosphate</name>
        <dbReference type="ChEBI" id="CHEBI:58228"/>
    </ligand>
</feature>
<feature type="binding site" evidence="1">
    <location>
        <position position="132"/>
    </location>
    <ligand>
        <name>carbamoyl phosphate</name>
        <dbReference type="ChEBI" id="CHEBI:58228"/>
    </ligand>
</feature>
<feature type="binding site" evidence="1">
    <location>
        <begin position="277"/>
        <end position="280"/>
    </location>
    <ligand>
        <name>putrescine</name>
        <dbReference type="ChEBI" id="CHEBI:326268"/>
    </ligand>
</feature>
<feature type="site" description="Important for structural integrity" evidence="1">
    <location>
        <position position="29"/>
    </location>
</feature>
<feature type="site" description="Important for structural integrity" evidence="1">
    <location>
        <position position="145"/>
    </location>
</feature>
<accession>Q6MSR6</accession>
<proteinExistence type="inferred from homology"/>
<reference key="1">
    <citation type="journal article" date="2004" name="Genome Res.">
        <title>The genome sequence of Mycoplasma mycoides subsp. mycoides SC type strain PG1T, the causative agent of contagious bovine pleuropneumonia (CBPP).</title>
        <authorList>
            <person name="Westberg J."/>
            <person name="Persson A."/>
            <person name="Holmberg A."/>
            <person name="Goesmann A."/>
            <person name="Lundeberg J."/>
            <person name="Johansson K.-E."/>
            <person name="Pettersson B."/>
            <person name="Uhlen M."/>
        </authorList>
    </citation>
    <scope>NUCLEOTIDE SEQUENCE [LARGE SCALE GENOMIC DNA]</scope>
    <source>
        <strain>CCUG 32753 / NCTC 10114 / PG1</strain>
    </source>
</reference>
<reference key="2">
    <citation type="journal article" date="2004" name="BMC Genomics">
        <title>Retrieving sequences of enzymes experimentally characterized but erroneously annotated: the case of the putrescine carbamoyltransferase.</title>
        <authorList>
            <person name="Naumoff D.G."/>
            <person name="Xu Y."/>
            <person name="Glansdorff N."/>
            <person name="Labedan B."/>
        </authorList>
    </citation>
    <scope>REANNOTATION AS A PTCASE</scope>
</reference>
<reference key="3">
    <citation type="journal article" date="2004" name="Microbiology">
        <title>The difficulty of annotating genes: the case of putrescine carbamoyltransferase.</title>
        <authorList>
            <person name="Naumoff D.G."/>
            <person name="Xu Y."/>
            <person name="Stalon V."/>
            <person name="Glansdorff N."/>
            <person name="Labedan B."/>
        </authorList>
    </citation>
    <scope>GENE NAME</scope>
</reference>
<comment type="function">
    <text evidence="1">Catalyzes the phosphorolysis of N-carbamoylputrescine to form carbamoyl phosphate and putrescine. Is involved in the degradation pathway of the polyamine agmatine.</text>
</comment>
<comment type="catalytic activity">
    <reaction evidence="1">
        <text>carbamoyl phosphate + putrescine = N-carbamoylputrescine + phosphate + H(+)</text>
        <dbReference type="Rhea" id="RHEA:21936"/>
        <dbReference type="ChEBI" id="CHEBI:15378"/>
        <dbReference type="ChEBI" id="CHEBI:43474"/>
        <dbReference type="ChEBI" id="CHEBI:58228"/>
        <dbReference type="ChEBI" id="CHEBI:58318"/>
        <dbReference type="ChEBI" id="CHEBI:326268"/>
        <dbReference type="EC" id="2.1.3.6"/>
    </reaction>
</comment>
<comment type="pathway">
    <text evidence="1">Amine and polyamine biosynthesis; putrescine biosynthesis via agmatine pathway; putrescine from N-carbamoylputrescine (transferase route): step 1/1.</text>
</comment>
<comment type="subunit">
    <text evidence="1">Homotrimer.</text>
</comment>
<comment type="subcellular location">
    <subcellularLocation>
        <location evidence="1">Cytoplasm</location>
    </subcellularLocation>
</comment>
<comment type="similarity">
    <text evidence="1">Belongs to the aspartate/ornithine carbamoyltransferase superfamily. PTCase family.</text>
</comment>
<protein>
    <recommendedName>
        <fullName evidence="1">Putrescine carbamoyltransferase</fullName>
        <shortName evidence="1">PTC</shortName>
        <shortName evidence="1">PTCase</shortName>
        <ecNumber evidence="1">2.1.3.6</ecNumber>
    </recommendedName>
    <alternativeName>
        <fullName evidence="1">Putrescine transcarbamoylase</fullName>
    </alternativeName>
    <alternativeName>
        <fullName evidence="1">Putrescine transcarbamylase</fullName>
    </alternativeName>
</protein>
<sequence>MNKVRHFIDTQDLSKKEIFEIFRLMKMLKEARYCGAVPELLKNKTLAMIFEEPSTRTRVSFEAAMTLLGGHAQYLKPGELHLGVRESLYDTTKVLSHMCDGIMCRALKNETVLNLAKYADVPVLNGLTDYNHPTQAICDVFTMLEYMPATKNLEYEDIKFEDIKVVFIGDRTNVCSSTMHITTKLGMNFVHISPKRYQSPQEWIDIANENIKQANSGSVLVTDDLEQVRGADIVYTDLWWWVDQEDEAEERVKAFKPTYQVTPELMEKAGKQALFMHCLPASRNVEVYDEVIDSDQSIAFEQAENRLTAQMGLLVYYLYPQIDKSSNAVKDYYRGKVEAFMEHQDRSWKQRYTYNNDYAETKNKK</sequence>
<dbReference type="EC" id="2.1.3.6" evidence="1"/>
<dbReference type="EMBL" id="BX293980">
    <property type="protein sequence ID" value="CAE77322.1"/>
    <property type="molecule type" value="Genomic_DNA"/>
</dbReference>
<dbReference type="RefSeq" id="NP_975680.1">
    <property type="nucleotide sequence ID" value="NC_005364.2"/>
</dbReference>
<dbReference type="RefSeq" id="WP_011166873.1">
    <property type="nucleotide sequence ID" value="NC_005364.2"/>
</dbReference>
<dbReference type="SMR" id="Q6MSR6"/>
<dbReference type="STRING" id="272632.MSC_0703"/>
<dbReference type="KEGG" id="mmy:MSC_0703"/>
<dbReference type="PATRIC" id="fig|272632.4.peg.757"/>
<dbReference type="eggNOG" id="COG0078">
    <property type="taxonomic scope" value="Bacteria"/>
</dbReference>
<dbReference type="HOGENOM" id="CLU_043846_3_1_14"/>
<dbReference type="UniPathway" id="UPA00534">
    <property type="reaction ID" value="UER00941"/>
</dbReference>
<dbReference type="Proteomes" id="UP000001016">
    <property type="component" value="Chromosome"/>
</dbReference>
<dbReference type="GO" id="GO:0005737">
    <property type="term" value="C:cytoplasm"/>
    <property type="evidence" value="ECO:0007669"/>
    <property type="project" value="UniProtKB-SubCell"/>
</dbReference>
<dbReference type="GO" id="GO:0016597">
    <property type="term" value="F:amino acid binding"/>
    <property type="evidence" value="ECO:0007669"/>
    <property type="project" value="InterPro"/>
</dbReference>
<dbReference type="GO" id="GO:0004585">
    <property type="term" value="F:ornithine carbamoyltransferase activity"/>
    <property type="evidence" value="ECO:0007669"/>
    <property type="project" value="TreeGrafter"/>
</dbReference>
<dbReference type="GO" id="GO:0050231">
    <property type="term" value="F:putrescine carbamoyltransferase activity"/>
    <property type="evidence" value="ECO:0007669"/>
    <property type="project" value="UniProtKB-UniRule"/>
</dbReference>
<dbReference type="GO" id="GO:0042450">
    <property type="term" value="P:arginine biosynthetic process via ornithine"/>
    <property type="evidence" value="ECO:0007669"/>
    <property type="project" value="TreeGrafter"/>
</dbReference>
<dbReference type="GO" id="GO:0019240">
    <property type="term" value="P:citrulline biosynthetic process"/>
    <property type="evidence" value="ECO:0007669"/>
    <property type="project" value="TreeGrafter"/>
</dbReference>
<dbReference type="GO" id="GO:0033390">
    <property type="term" value="P:putrescine biosynthetic process from arginine via N-carbamoylputrescine"/>
    <property type="evidence" value="ECO:0007669"/>
    <property type="project" value="UniProtKB-UniRule"/>
</dbReference>
<dbReference type="FunFam" id="3.40.50.1370:FF:000008">
    <property type="entry name" value="Ornithine carbamoyltransferase"/>
    <property type="match status" value="1"/>
</dbReference>
<dbReference type="Gene3D" id="3.40.50.1370">
    <property type="entry name" value="Aspartate/ornithine carbamoyltransferase"/>
    <property type="match status" value="2"/>
</dbReference>
<dbReference type="HAMAP" id="MF_02102">
    <property type="entry name" value="PTCase"/>
    <property type="match status" value="1"/>
</dbReference>
<dbReference type="InterPro" id="IPR006132">
    <property type="entry name" value="Asp/Orn_carbamoyltranf_P-bd"/>
</dbReference>
<dbReference type="InterPro" id="IPR006130">
    <property type="entry name" value="Asp/Orn_carbamoylTrfase"/>
</dbReference>
<dbReference type="InterPro" id="IPR036901">
    <property type="entry name" value="Asp/Orn_carbamoylTrfase_sf"/>
</dbReference>
<dbReference type="InterPro" id="IPR006131">
    <property type="entry name" value="Asp_carbamoyltransf_Asp/Orn-bd"/>
</dbReference>
<dbReference type="InterPro" id="IPR002292">
    <property type="entry name" value="Orn/put_carbamltrans"/>
</dbReference>
<dbReference type="InterPro" id="IPR024903">
    <property type="entry name" value="PtcA"/>
</dbReference>
<dbReference type="NCBIfam" id="TIGR00658">
    <property type="entry name" value="orni_carb_tr"/>
    <property type="match status" value="1"/>
</dbReference>
<dbReference type="NCBIfam" id="NF001986">
    <property type="entry name" value="PRK00779.1"/>
    <property type="match status" value="1"/>
</dbReference>
<dbReference type="NCBIfam" id="TIGR04384">
    <property type="entry name" value="putr_carbamoyl"/>
    <property type="match status" value="1"/>
</dbReference>
<dbReference type="PANTHER" id="PTHR45753">
    <property type="entry name" value="ORNITHINE CARBAMOYLTRANSFERASE, MITOCHONDRIAL"/>
    <property type="match status" value="1"/>
</dbReference>
<dbReference type="PANTHER" id="PTHR45753:SF3">
    <property type="entry name" value="ORNITHINE TRANSCARBAMYLASE, MITOCHONDRIAL"/>
    <property type="match status" value="1"/>
</dbReference>
<dbReference type="Pfam" id="PF00185">
    <property type="entry name" value="OTCace"/>
    <property type="match status" value="1"/>
</dbReference>
<dbReference type="Pfam" id="PF02729">
    <property type="entry name" value="OTCace_N"/>
    <property type="match status" value="1"/>
</dbReference>
<dbReference type="PRINTS" id="PR00100">
    <property type="entry name" value="AOTCASE"/>
</dbReference>
<dbReference type="PRINTS" id="PR00102">
    <property type="entry name" value="OTCASE"/>
</dbReference>
<dbReference type="SUPFAM" id="SSF53671">
    <property type="entry name" value="Aspartate/ornithine carbamoyltransferase"/>
    <property type="match status" value="1"/>
</dbReference>
<dbReference type="PROSITE" id="PS00097">
    <property type="entry name" value="CARBAMOYLTRANSFERASE"/>
    <property type="match status" value="1"/>
</dbReference>
<name>PTC_MYCMS</name>
<organism>
    <name type="scientific">Mycoplasma mycoides subsp. mycoides SC (strain CCUG 32753 / NCTC 10114 / PG1)</name>
    <dbReference type="NCBI Taxonomy" id="272632"/>
    <lineage>
        <taxon>Bacteria</taxon>
        <taxon>Bacillati</taxon>
        <taxon>Mycoplasmatota</taxon>
        <taxon>Mollicutes</taxon>
        <taxon>Mycoplasmataceae</taxon>
        <taxon>Mycoplasma</taxon>
    </lineage>
</organism>